<gene>
    <name evidence="1" type="primary">psbF</name>
</gene>
<proteinExistence type="inferred from homology"/>
<name>PSBF_LIRTU</name>
<keyword id="KW-0150">Chloroplast</keyword>
<keyword id="KW-0249">Electron transport</keyword>
<keyword id="KW-0349">Heme</keyword>
<keyword id="KW-0408">Iron</keyword>
<keyword id="KW-0472">Membrane</keyword>
<keyword id="KW-0479">Metal-binding</keyword>
<keyword id="KW-0602">Photosynthesis</keyword>
<keyword id="KW-0604">Photosystem II</keyword>
<keyword id="KW-0934">Plastid</keyword>
<keyword id="KW-0793">Thylakoid</keyword>
<keyword id="KW-0812">Transmembrane</keyword>
<keyword id="KW-1133">Transmembrane helix</keyword>
<keyword id="KW-0813">Transport</keyword>
<protein>
    <recommendedName>
        <fullName evidence="1">Cytochrome b559 subunit beta</fullName>
    </recommendedName>
    <alternativeName>
        <fullName evidence="1">PSII reaction center subunit VI</fullName>
    </alternativeName>
</protein>
<feature type="chain" id="PRO_0000200413" description="Cytochrome b559 subunit beta">
    <location>
        <begin position="1"/>
        <end position="39"/>
    </location>
</feature>
<feature type="transmembrane region" description="Helical" evidence="1">
    <location>
        <begin position="14"/>
        <end position="30"/>
    </location>
</feature>
<feature type="binding site" description="axial binding residue" evidence="1">
    <location>
        <position position="18"/>
    </location>
    <ligand>
        <name>heme</name>
        <dbReference type="ChEBI" id="CHEBI:30413"/>
        <note>ligand shared with alpha subunit</note>
    </ligand>
    <ligandPart>
        <name>Fe</name>
        <dbReference type="ChEBI" id="CHEBI:18248"/>
    </ligandPart>
</feature>
<organism>
    <name type="scientific">Liriodendron tulipifera</name>
    <name type="common">Tuliptree</name>
    <name type="synonym">Tulip poplar</name>
    <dbReference type="NCBI Taxonomy" id="3415"/>
    <lineage>
        <taxon>Eukaryota</taxon>
        <taxon>Viridiplantae</taxon>
        <taxon>Streptophyta</taxon>
        <taxon>Embryophyta</taxon>
        <taxon>Tracheophyta</taxon>
        <taxon>Spermatophyta</taxon>
        <taxon>Magnoliopsida</taxon>
        <taxon>Magnoliidae</taxon>
        <taxon>Magnoliales</taxon>
        <taxon>Magnoliaceae</taxon>
        <taxon>Liriodendron</taxon>
    </lineage>
</organism>
<evidence type="ECO:0000255" key="1">
    <source>
        <dbReference type="HAMAP-Rule" id="MF_00643"/>
    </source>
</evidence>
<sequence length="39" mass="4424">MTIDRTYPIFTVRWLAVHGLAVPTVSFLGSISAMQFIQR</sequence>
<geneLocation type="chloroplast"/>
<comment type="function">
    <text evidence="1">This b-type cytochrome is tightly associated with the reaction center of photosystem II (PSII). PSII is a light-driven water:plastoquinone oxidoreductase that uses light energy to abstract electrons from H(2)O, generating O(2) and a proton gradient subsequently used for ATP formation. It consists of a core antenna complex that captures photons, and an electron transfer chain that converts photonic excitation into a charge separation.</text>
</comment>
<comment type="cofactor">
    <cofactor evidence="1">
        <name>heme b</name>
        <dbReference type="ChEBI" id="CHEBI:60344"/>
    </cofactor>
    <text evidence="1">With its partner (PsbE) binds heme. PSII binds additional chlorophylls, carotenoids and specific lipids.</text>
</comment>
<comment type="subunit">
    <text evidence="1">Heterodimer of an alpha subunit and a beta subunit. PSII is composed of 1 copy each of membrane proteins PsbA, PsbB, PsbC, PsbD, PsbE, PsbF, PsbH, PsbI, PsbJ, PsbK, PsbL, PsbM, PsbT, PsbX, PsbY, PsbZ, Psb30/Ycf12, at least 3 peripheral proteins of the oxygen-evolving complex and a large number of cofactors. It forms dimeric complexes.</text>
</comment>
<comment type="subcellular location">
    <subcellularLocation>
        <location evidence="1">Plastid</location>
        <location evidence="1">Chloroplast thylakoid membrane</location>
        <topology evidence="1">Single-pass membrane protein</topology>
    </subcellularLocation>
</comment>
<comment type="similarity">
    <text evidence="1">Belongs to the PsbE/PsbF family.</text>
</comment>
<accession>Q7J1A5</accession>
<accession>Q0G9K3</accession>
<reference key="1">
    <citation type="journal article" date="2000" name="Am. J. Bot.">
        <title>Utility of 17 chloroplast genes for inferring the phylogeny of the basal angiosperms.</title>
        <authorList>
            <person name="Graham S.W."/>
            <person name="Olmstead R.G."/>
        </authorList>
    </citation>
    <scope>NUCLEOTIDE SEQUENCE [GENOMIC DNA]</scope>
</reference>
<reference key="2">
    <citation type="journal article" date="2006" name="BMC Evol. Biol.">
        <title>Complete plastid genome sequences of Drimys, Liriodendron, and Piper: implications for the phylogenetic relationships of magnoliids.</title>
        <authorList>
            <person name="Cai Z."/>
            <person name="Penaflor C."/>
            <person name="Kuehl J.V."/>
            <person name="Leebens-Mack J."/>
            <person name="Carlson J.E."/>
            <person name="dePamphilis C.W."/>
            <person name="Boore J.L."/>
            <person name="Jansen R.K."/>
        </authorList>
    </citation>
    <scope>NUCLEOTIDE SEQUENCE [LARGE SCALE GENOMIC DNA]</scope>
</reference>
<dbReference type="EMBL" id="AF123840">
    <property type="protein sequence ID" value="AAG26239.1"/>
    <property type="molecule type" value="Genomic_DNA"/>
</dbReference>
<dbReference type="EMBL" id="DQ899947">
    <property type="protein sequence ID" value="ABI32525.1"/>
    <property type="molecule type" value="Genomic_DNA"/>
</dbReference>
<dbReference type="RefSeq" id="YP_740218.1">
    <property type="nucleotide sequence ID" value="NC_008326.1"/>
</dbReference>
<dbReference type="SMR" id="Q7J1A5"/>
<dbReference type="GeneID" id="4266640"/>
<dbReference type="GO" id="GO:0009535">
    <property type="term" value="C:chloroplast thylakoid membrane"/>
    <property type="evidence" value="ECO:0007669"/>
    <property type="project" value="UniProtKB-SubCell"/>
</dbReference>
<dbReference type="GO" id="GO:0009539">
    <property type="term" value="C:photosystem II reaction center"/>
    <property type="evidence" value="ECO:0007669"/>
    <property type="project" value="InterPro"/>
</dbReference>
<dbReference type="GO" id="GO:0009055">
    <property type="term" value="F:electron transfer activity"/>
    <property type="evidence" value="ECO:0007669"/>
    <property type="project" value="UniProtKB-UniRule"/>
</dbReference>
<dbReference type="GO" id="GO:0020037">
    <property type="term" value="F:heme binding"/>
    <property type="evidence" value="ECO:0007669"/>
    <property type="project" value="InterPro"/>
</dbReference>
<dbReference type="GO" id="GO:0005506">
    <property type="term" value="F:iron ion binding"/>
    <property type="evidence" value="ECO:0007669"/>
    <property type="project" value="UniProtKB-UniRule"/>
</dbReference>
<dbReference type="GO" id="GO:0009767">
    <property type="term" value="P:photosynthetic electron transport chain"/>
    <property type="evidence" value="ECO:0007669"/>
    <property type="project" value="InterPro"/>
</dbReference>
<dbReference type="HAMAP" id="MF_00643">
    <property type="entry name" value="PSII_PsbF"/>
    <property type="match status" value="1"/>
</dbReference>
<dbReference type="InterPro" id="IPR006241">
    <property type="entry name" value="PSII_cyt_b559_bsu"/>
</dbReference>
<dbReference type="InterPro" id="IPR006216">
    <property type="entry name" value="PSII_cyt_b559_CS"/>
</dbReference>
<dbReference type="InterPro" id="IPR013081">
    <property type="entry name" value="PSII_cyt_b559_N"/>
</dbReference>
<dbReference type="NCBIfam" id="TIGR01333">
    <property type="entry name" value="cyt_b559_beta"/>
    <property type="match status" value="1"/>
</dbReference>
<dbReference type="Pfam" id="PF00283">
    <property type="entry name" value="Cytochrom_B559"/>
    <property type="match status" value="1"/>
</dbReference>
<dbReference type="PIRSF" id="PIRSF000037">
    <property type="entry name" value="PsbF"/>
    <property type="match status" value="1"/>
</dbReference>
<dbReference type="SUPFAM" id="SSF161045">
    <property type="entry name" value="Cytochrome b559 subunits"/>
    <property type="match status" value="1"/>
</dbReference>
<dbReference type="PROSITE" id="PS00537">
    <property type="entry name" value="CYTOCHROME_B559"/>
    <property type="match status" value="1"/>
</dbReference>